<reference key="1">
    <citation type="journal article" date="1996" name="J. Virol.">
        <title>Determination and analysis of the complete nucleotide sequence of human herpesvirus.</title>
        <authorList>
            <person name="Nicholas J."/>
        </authorList>
    </citation>
    <scope>NUCLEOTIDE SEQUENCE [LARGE SCALE GENOMIC DNA]</scope>
</reference>
<feature type="chain" id="PRO_0000116331" description="Protein U84">
    <location>
        <begin position="1"/>
        <end position="310"/>
    </location>
</feature>
<keyword id="KW-1185">Reference proteome</keyword>
<accession>P52534</accession>
<evidence type="ECO:0000305" key="1"/>
<proteinExistence type="inferred from homology"/>
<sequence length="310" mass="35650">MRGKKRKTVCKAKGKLTSKSCMCTKANARYTCNCFSKTLPFNEKAIKCTIPEKINSEINISKSEMLLKADKYTNAIYKHSKLRKIFKAVKENLSTTNFATKSKGIVHSNFNDSKPIHSPEIKNYTDFNCDFMHPCGLCSPKNFLSEVYKLLRFYNSTVVQIQVYSRNGLLVNSLHEKLMEIANLIVNKGEQTVSETFFHEQKTAIAINRFLRGTVPHTELTRKEAMMPVNVNSKHRKNSGVYSLYINAPTEKDLFCAAHLCVQFSIRYPADILLNVSKLTQPLLLKEHLIIYNTFNRYIYWDDYGKLLKT</sequence>
<name>VU84_HHV7J</name>
<protein>
    <recommendedName>
        <fullName>Protein U84</fullName>
    </recommendedName>
</protein>
<organism>
    <name type="scientific">Human herpesvirus 7 (strain JI)</name>
    <name type="common">HHV-7</name>
    <name type="synonym">Human T lymphotropic virus</name>
    <dbReference type="NCBI Taxonomy" id="57278"/>
    <lineage>
        <taxon>Viruses</taxon>
        <taxon>Duplodnaviria</taxon>
        <taxon>Heunggongvirae</taxon>
        <taxon>Peploviricota</taxon>
        <taxon>Herviviricetes</taxon>
        <taxon>Herpesvirales</taxon>
        <taxon>Orthoherpesviridae</taxon>
        <taxon>Betaherpesvirinae</taxon>
        <taxon>Roseolovirus</taxon>
        <taxon>Roseolovirus humanbeta7</taxon>
        <taxon>Human betaherpesvirus 7</taxon>
    </lineage>
</organism>
<gene>
    <name type="primary">U84</name>
</gene>
<dbReference type="EMBL" id="U43400">
    <property type="protein sequence ID" value="AAC54745.1"/>
    <property type="molecule type" value="Genomic_DNA"/>
</dbReference>
<dbReference type="PIR" id="T41985">
    <property type="entry name" value="T41985"/>
</dbReference>
<dbReference type="Proteomes" id="UP000009246">
    <property type="component" value="Segment"/>
</dbReference>
<dbReference type="GO" id="GO:0006355">
    <property type="term" value="P:regulation of DNA-templated transcription"/>
    <property type="evidence" value="ECO:0007669"/>
    <property type="project" value="InterPro"/>
</dbReference>
<dbReference type="InterPro" id="IPR005028">
    <property type="entry name" value="Herpes_IE2_3"/>
</dbReference>
<dbReference type="Pfam" id="PF03361">
    <property type="entry name" value="Herpes_IE2_3"/>
    <property type="match status" value="1"/>
</dbReference>
<organismHost>
    <name type="scientific">Homo sapiens</name>
    <name type="common">Human</name>
    <dbReference type="NCBI Taxonomy" id="9606"/>
</organismHost>
<comment type="similarity">
    <text evidence="1">Belongs to the herpesviridae U84 family.</text>
</comment>